<protein>
    <recommendedName>
        <fullName>Multidrug resistance efflux pump SepA</fullName>
    </recommendedName>
    <alternativeName>
        <fullName>Antiseptic resistance protein SepA</fullName>
    </alternativeName>
    <alternativeName>
        <fullName>Staphylococcal efflux pump A</fullName>
    </alternativeName>
</protein>
<reference key="1">
    <citation type="journal article" date="2007" name="PLoS ONE">
        <title>Molecular correlates of host specialization in Staphylococcus aureus.</title>
        <authorList>
            <person name="Herron-Olson L."/>
            <person name="Fitzgerald J.R."/>
            <person name="Musser J.M."/>
            <person name="Kapur V."/>
        </authorList>
    </citation>
    <scope>NUCLEOTIDE SEQUENCE [LARGE SCALE GENOMIC DNA]</scope>
    <source>
        <strain>bovine RF122 / ET3-1</strain>
    </source>
</reference>
<gene>
    <name type="primary">sepA</name>
    <name type="ordered locus">SAB2049c</name>
</gene>
<evidence type="ECO:0000250" key="1"/>
<evidence type="ECO:0000255" key="2"/>
<evidence type="ECO:0000305" key="3"/>
<proteinExistence type="inferred from homology"/>
<keyword id="KW-1003">Cell membrane</keyword>
<keyword id="KW-0472">Membrane</keyword>
<keyword id="KW-0812">Transmembrane</keyword>
<keyword id="KW-1133">Transmembrane helix</keyword>
<keyword id="KW-0813">Transport</keyword>
<feature type="chain" id="PRO_0000351483" description="Multidrug resistance efflux pump SepA">
    <location>
        <begin position="1"/>
        <end position="157"/>
    </location>
</feature>
<feature type="transmembrane region" description="Helical" evidence="2">
    <location>
        <begin position="18"/>
        <end position="38"/>
    </location>
</feature>
<feature type="transmembrane region" description="Helical" evidence="2">
    <location>
        <begin position="63"/>
        <end position="83"/>
    </location>
</feature>
<feature type="transmembrane region" description="Helical" evidence="2">
    <location>
        <begin position="100"/>
        <end position="120"/>
    </location>
</feature>
<feature type="transmembrane region" description="Helical" evidence="2">
    <location>
        <begin position="122"/>
        <end position="142"/>
    </location>
</feature>
<accession>Q2YYH7</accession>
<comment type="function">
    <text evidence="1">Involved in multidrug efflux.</text>
</comment>
<comment type="subcellular location">
    <subcellularLocation>
        <location evidence="3">Cell membrane</location>
        <topology evidence="3">Multi-pass membrane protein</topology>
    </subcellularLocation>
</comment>
<comment type="similarity">
    <text evidence="3">Belongs to the multidrug resistance efflux pump SepA family.</text>
</comment>
<sequence length="157" mass="18876">MIVNYLKNKFYNLLTTMIVLFIFVLSGAIFLTFLGFGLYGLSRILIYFRLGDFTYNRSMYDNLLYYGSYIIFGYFIIFAVEHLMDYFRKMLPENAYFRGATFHLISYTVATTLFYFIIHLNYVYINIDFWVIMVIIGFLYVCKLQFYPESKNLNNRK</sequence>
<name>MDEP_STAAB</name>
<dbReference type="EMBL" id="AJ938182">
    <property type="protein sequence ID" value="CAI81738.1"/>
    <property type="molecule type" value="Genomic_DNA"/>
</dbReference>
<dbReference type="RefSeq" id="WP_011382353.1">
    <property type="nucleotide sequence ID" value="NC_007622.1"/>
</dbReference>
<dbReference type="KEGG" id="sab:SAB2049c"/>
<dbReference type="HOGENOM" id="CLU_151983_0_0_9"/>
<dbReference type="GO" id="GO:0005886">
    <property type="term" value="C:plasma membrane"/>
    <property type="evidence" value="ECO:0007669"/>
    <property type="project" value="UniProtKB-SubCell"/>
</dbReference>
<dbReference type="InterPro" id="IPR031396">
    <property type="entry name" value="SepA"/>
</dbReference>
<dbReference type="Pfam" id="PF17080">
    <property type="entry name" value="SepA"/>
    <property type="match status" value="1"/>
</dbReference>
<organism>
    <name type="scientific">Staphylococcus aureus (strain bovine RF122 / ET3-1)</name>
    <dbReference type="NCBI Taxonomy" id="273036"/>
    <lineage>
        <taxon>Bacteria</taxon>
        <taxon>Bacillati</taxon>
        <taxon>Bacillota</taxon>
        <taxon>Bacilli</taxon>
        <taxon>Bacillales</taxon>
        <taxon>Staphylococcaceae</taxon>
        <taxon>Staphylococcus</taxon>
    </lineage>
</organism>